<name>RL32_MYCPN</name>
<reference key="1">
    <citation type="journal article" date="1996" name="Nucleic Acids Res.">
        <title>Complete sequence analysis of the genome of the bacterium Mycoplasma pneumoniae.</title>
        <authorList>
            <person name="Himmelreich R."/>
            <person name="Hilbert H."/>
            <person name="Plagens H."/>
            <person name="Pirkl E."/>
            <person name="Li B.-C."/>
            <person name="Herrmann R."/>
        </authorList>
    </citation>
    <scope>NUCLEOTIDE SEQUENCE [LARGE SCALE GENOMIC DNA]</scope>
    <source>
        <strain>ATCC 29342 / M129 / Subtype 1</strain>
    </source>
</reference>
<proteinExistence type="evidence at protein level"/>
<accession>P75238</accession>
<evidence type="ECO:0000250" key="1"/>
<evidence type="ECO:0000256" key="2">
    <source>
        <dbReference type="SAM" id="MobiDB-lite"/>
    </source>
</evidence>
<evidence type="ECO:0000305" key="3"/>
<evidence type="ECO:0007829" key="4">
    <source>
        <dbReference type="PDB" id="8P8B"/>
    </source>
</evidence>
<comment type="similarity">
    <text evidence="3">Belongs to the bacterial ribosomal protein bL32 family.</text>
</comment>
<sequence>MAVQQRRSSKHRRDKRRSHDALTAQALSVCQKCGKKKLFHRVCSCGMYGDLRVKKAY</sequence>
<protein>
    <recommendedName>
        <fullName evidence="3">Large ribosomal subunit protein bL32</fullName>
    </recommendedName>
    <alternativeName>
        <fullName>50S ribosomal protein L32</fullName>
    </alternativeName>
</protein>
<gene>
    <name type="primary">rpmF</name>
    <name type="ordered locus">MPN_540</name>
    <name type="ORF">MP302</name>
</gene>
<feature type="initiator methionine" description="Removed" evidence="1">
    <location>
        <position position="1"/>
    </location>
</feature>
<feature type="chain" id="PRO_0000172370" description="Large ribosomal subunit protein bL32">
    <location>
        <begin position="2"/>
        <end position="57"/>
    </location>
</feature>
<feature type="region of interest" description="Disordered" evidence="2">
    <location>
        <begin position="1"/>
        <end position="21"/>
    </location>
</feature>
<feature type="compositionally biased region" description="Basic residues" evidence="2">
    <location>
        <begin position="7"/>
        <end position="18"/>
    </location>
</feature>
<feature type="helix" evidence="4">
    <location>
        <begin position="10"/>
        <end position="17"/>
    </location>
</feature>
<feature type="strand" evidence="4">
    <location>
        <begin position="27"/>
        <end position="29"/>
    </location>
</feature>
<feature type="turn" evidence="4">
    <location>
        <begin position="31"/>
        <end position="33"/>
    </location>
</feature>
<feature type="strand" evidence="4">
    <location>
        <begin position="36"/>
        <end position="38"/>
    </location>
</feature>
<feature type="strand" evidence="4">
    <location>
        <begin position="46"/>
        <end position="48"/>
    </location>
</feature>
<keyword id="KW-0002">3D-structure</keyword>
<keyword id="KW-1185">Reference proteome</keyword>
<keyword id="KW-0687">Ribonucleoprotein</keyword>
<keyword id="KW-0689">Ribosomal protein</keyword>
<dbReference type="EMBL" id="U00089">
    <property type="protein sequence ID" value="AAB95950.1"/>
    <property type="molecule type" value="Genomic_DNA"/>
</dbReference>
<dbReference type="PIR" id="S73628">
    <property type="entry name" value="S73628"/>
</dbReference>
<dbReference type="RefSeq" id="NP_110229.1">
    <property type="nucleotide sequence ID" value="NC_000912.1"/>
</dbReference>
<dbReference type="RefSeq" id="WP_010874897.1">
    <property type="nucleotide sequence ID" value="NZ_OU342337.1"/>
</dbReference>
<dbReference type="PDB" id="7OOD">
    <property type="method" value="EM"/>
    <property type="resolution" value="3.40 A"/>
    <property type="chains" value="y=1-57"/>
</dbReference>
<dbReference type="PDB" id="7P6Z">
    <property type="method" value="EM"/>
    <property type="resolution" value="3.50 A"/>
    <property type="chains" value="y=1-57"/>
</dbReference>
<dbReference type="PDB" id="7PAH">
    <property type="method" value="EM"/>
    <property type="resolution" value="9.50 A"/>
    <property type="chains" value="y=1-57"/>
</dbReference>
<dbReference type="PDB" id="7PAI">
    <property type="method" value="EM"/>
    <property type="resolution" value="6.70 A"/>
    <property type="chains" value="y=1-57"/>
</dbReference>
<dbReference type="PDB" id="7PAJ">
    <property type="method" value="EM"/>
    <property type="resolution" value="7.30 A"/>
    <property type="chains" value="y=1-57"/>
</dbReference>
<dbReference type="PDB" id="7PAK">
    <property type="method" value="EM"/>
    <property type="resolution" value="5.30 A"/>
    <property type="chains" value="y=1-57"/>
</dbReference>
<dbReference type="PDB" id="7PAL">
    <property type="method" value="EM"/>
    <property type="resolution" value="4.70 A"/>
    <property type="chains" value="y=1-57"/>
</dbReference>
<dbReference type="PDB" id="7PAM">
    <property type="method" value="EM"/>
    <property type="resolution" value="6.80 A"/>
    <property type="chains" value="y=1-57"/>
</dbReference>
<dbReference type="PDB" id="7PAN">
    <property type="method" value="EM"/>
    <property type="resolution" value="9.70 A"/>
    <property type="chains" value="y=1-57"/>
</dbReference>
<dbReference type="PDB" id="7PAO">
    <property type="method" value="EM"/>
    <property type="resolution" value="7.00 A"/>
    <property type="chains" value="y=1-57"/>
</dbReference>
<dbReference type="PDB" id="7PAQ">
    <property type="method" value="EM"/>
    <property type="resolution" value="8.90 A"/>
    <property type="chains" value="y=1-57"/>
</dbReference>
<dbReference type="PDB" id="7PAR">
    <property type="method" value="EM"/>
    <property type="resolution" value="8.20 A"/>
    <property type="chains" value="y=1-57"/>
</dbReference>
<dbReference type="PDB" id="7PAS">
    <property type="method" value="EM"/>
    <property type="resolution" value="16.00 A"/>
    <property type="chains" value="y=1-57"/>
</dbReference>
<dbReference type="PDB" id="7PAT">
    <property type="method" value="EM"/>
    <property type="resolution" value="9.20 A"/>
    <property type="chains" value="y=1-57"/>
</dbReference>
<dbReference type="PDB" id="7PAU">
    <property type="method" value="EM"/>
    <property type="resolution" value="8.30 A"/>
    <property type="chains" value="y=1-57"/>
</dbReference>
<dbReference type="PDB" id="7PH9">
    <property type="method" value="EM"/>
    <property type="resolution" value="8.70 A"/>
    <property type="chains" value="y=1-57"/>
</dbReference>
<dbReference type="PDB" id="7PHA">
    <property type="method" value="EM"/>
    <property type="resolution" value="8.50 A"/>
    <property type="chains" value="y=1-57"/>
</dbReference>
<dbReference type="PDB" id="7PHB">
    <property type="method" value="EM"/>
    <property type="resolution" value="4.90 A"/>
    <property type="chains" value="y=1-57"/>
</dbReference>
<dbReference type="PDB" id="7PHC">
    <property type="method" value="EM"/>
    <property type="resolution" value="9.90 A"/>
    <property type="chains" value="y=1-57"/>
</dbReference>
<dbReference type="PDB" id="7PI8">
    <property type="method" value="EM"/>
    <property type="resolution" value="8.90 A"/>
    <property type="chains" value="y=1-57"/>
</dbReference>
<dbReference type="PDB" id="7PI9">
    <property type="method" value="EM"/>
    <property type="resolution" value="6.30 A"/>
    <property type="chains" value="y=1-57"/>
</dbReference>
<dbReference type="PDB" id="7PIA">
    <property type="method" value="EM"/>
    <property type="resolution" value="13.60 A"/>
    <property type="chains" value="y=1-57"/>
</dbReference>
<dbReference type="PDB" id="7PIB">
    <property type="method" value="EM"/>
    <property type="resolution" value="4.70 A"/>
    <property type="chains" value="y=1-57"/>
</dbReference>
<dbReference type="PDB" id="7PIC">
    <property type="method" value="EM"/>
    <property type="resolution" value="9.10 A"/>
    <property type="chains" value="y=1-57"/>
</dbReference>
<dbReference type="PDB" id="7PIO">
    <property type="method" value="EM"/>
    <property type="resolution" value="9.50 A"/>
    <property type="chains" value="y=1-57"/>
</dbReference>
<dbReference type="PDB" id="7PIP">
    <property type="method" value="EM"/>
    <property type="resolution" value="9.30 A"/>
    <property type="chains" value="y=1-57"/>
</dbReference>
<dbReference type="PDB" id="7PIQ">
    <property type="method" value="EM"/>
    <property type="resolution" value="9.70 A"/>
    <property type="chains" value="y=1-57"/>
</dbReference>
<dbReference type="PDB" id="7PIR">
    <property type="method" value="EM"/>
    <property type="resolution" value="12.10 A"/>
    <property type="chains" value="y=1-57"/>
</dbReference>
<dbReference type="PDB" id="7PIS">
    <property type="method" value="EM"/>
    <property type="resolution" value="15.00 A"/>
    <property type="chains" value="y=1-57"/>
</dbReference>
<dbReference type="PDB" id="7PIT">
    <property type="method" value="EM"/>
    <property type="resolution" value="5.70 A"/>
    <property type="chains" value="y=1-57"/>
</dbReference>
<dbReference type="PDB" id="8P7X">
    <property type="method" value="EM"/>
    <property type="resolution" value="3.03 A"/>
    <property type="chains" value="y=1-57"/>
</dbReference>
<dbReference type="PDB" id="8P7Y">
    <property type="method" value="EM"/>
    <property type="resolution" value="3.70 A"/>
    <property type="chains" value="y=1-57"/>
</dbReference>
<dbReference type="PDB" id="8P8B">
    <property type="method" value="EM"/>
    <property type="resolution" value="2.90 A"/>
    <property type="chains" value="y=1-57"/>
</dbReference>
<dbReference type="PDB" id="8P8V">
    <property type="method" value="EM"/>
    <property type="resolution" value="8.70 A"/>
    <property type="chains" value="y=1-57"/>
</dbReference>
<dbReference type="PDB" id="8P8W">
    <property type="method" value="EM"/>
    <property type="resolution" value="8.70 A"/>
    <property type="chains" value="y=1-57"/>
</dbReference>
<dbReference type="PDBsum" id="7OOD"/>
<dbReference type="PDBsum" id="7P6Z"/>
<dbReference type="PDBsum" id="7PAH"/>
<dbReference type="PDBsum" id="7PAI"/>
<dbReference type="PDBsum" id="7PAJ"/>
<dbReference type="PDBsum" id="7PAK"/>
<dbReference type="PDBsum" id="7PAL"/>
<dbReference type="PDBsum" id="7PAM"/>
<dbReference type="PDBsum" id="7PAN"/>
<dbReference type="PDBsum" id="7PAO"/>
<dbReference type="PDBsum" id="7PAQ"/>
<dbReference type="PDBsum" id="7PAR"/>
<dbReference type="PDBsum" id="7PAS"/>
<dbReference type="PDBsum" id="7PAT"/>
<dbReference type="PDBsum" id="7PAU"/>
<dbReference type="PDBsum" id="7PH9"/>
<dbReference type="PDBsum" id="7PHA"/>
<dbReference type="PDBsum" id="7PHB"/>
<dbReference type="PDBsum" id="7PHC"/>
<dbReference type="PDBsum" id="7PI8"/>
<dbReference type="PDBsum" id="7PI9"/>
<dbReference type="PDBsum" id="7PIA"/>
<dbReference type="PDBsum" id="7PIB"/>
<dbReference type="PDBsum" id="7PIC"/>
<dbReference type="PDBsum" id="7PIO"/>
<dbReference type="PDBsum" id="7PIP"/>
<dbReference type="PDBsum" id="7PIQ"/>
<dbReference type="PDBsum" id="7PIR"/>
<dbReference type="PDBsum" id="7PIS"/>
<dbReference type="PDBsum" id="7PIT"/>
<dbReference type="PDBsum" id="8P7X"/>
<dbReference type="PDBsum" id="8P7Y"/>
<dbReference type="PDBsum" id="8P8B"/>
<dbReference type="PDBsum" id="8P8V"/>
<dbReference type="PDBsum" id="8P8W"/>
<dbReference type="EMDB" id="EMD-13234"/>
<dbReference type="EMDB" id="EMD-13272"/>
<dbReference type="EMDB" id="EMD-13273"/>
<dbReference type="EMDB" id="EMD-13274"/>
<dbReference type="EMDB" id="EMD-13275"/>
<dbReference type="EMDB" id="EMD-13276"/>
<dbReference type="EMDB" id="EMD-13277"/>
<dbReference type="EMDB" id="EMD-13278"/>
<dbReference type="EMDB" id="EMD-13279"/>
<dbReference type="EMDB" id="EMD-13280"/>
<dbReference type="EMDB" id="EMD-13281"/>
<dbReference type="EMDB" id="EMD-13282"/>
<dbReference type="EMDB" id="EMD-13285"/>
<dbReference type="EMDB" id="EMD-13286"/>
<dbReference type="EMDB" id="EMD-13410"/>
<dbReference type="EMDB" id="EMD-13411"/>
<dbReference type="EMDB" id="EMD-13412"/>
<dbReference type="EMDB" id="EMD-13413"/>
<dbReference type="EMDB" id="EMD-13432"/>
<dbReference type="EMDB" id="EMD-13433"/>
<dbReference type="EMDB" id="EMD-13434"/>
<dbReference type="EMDB" id="EMD-13435"/>
<dbReference type="EMDB" id="EMD-13436"/>
<dbReference type="EMDB" id="EMD-13445"/>
<dbReference type="EMDB" id="EMD-13446"/>
<dbReference type="EMDB" id="EMD-13447"/>
<dbReference type="EMDB" id="EMD-13448"/>
<dbReference type="EMDB" id="EMD-13449"/>
<dbReference type="EMDB" id="EMD-13450"/>
<dbReference type="SMR" id="P75238"/>
<dbReference type="IntAct" id="P75238">
    <property type="interactions" value="2"/>
</dbReference>
<dbReference type="STRING" id="272634.MPN_540"/>
<dbReference type="EnsemblBacteria" id="AAB95950">
    <property type="protein sequence ID" value="AAB95950"/>
    <property type="gene ID" value="MPN_540"/>
</dbReference>
<dbReference type="KEGG" id="mpn:MPN_540"/>
<dbReference type="PATRIC" id="fig|272634.6.peg.602"/>
<dbReference type="HOGENOM" id="CLU_129084_1_3_14"/>
<dbReference type="OrthoDB" id="9812874at2"/>
<dbReference type="BioCyc" id="MPNE272634:G1GJ3-890-MONOMER"/>
<dbReference type="Proteomes" id="UP000000808">
    <property type="component" value="Chromosome"/>
</dbReference>
<dbReference type="GO" id="GO:0015934">
    <property type="term" value="C:large ribosomal subunit"/>
    <property type="evidence" value="ECO:0007669"/>
    <property type="project" value="InterPro"/>
</dbReference>
<dbReference type="GO" id="GO:0003735">
    <property type="term" value="F:structural constituent of ribosome"/>
    <property type="evidence" value="ECO:0007669"/>
    <property type="project" value="InterPro"/>
</dbReference>
<dbReference type="GO" id="GO:0006412">
    <property type="term" value="P:translation"/>
    <property type="evidence" value="ECO:0007669"/>
    <property type="project" value="UniProtKB-UniRule"/>
</dbReference>
<dbReference type="HAMAP" id="MF_00340">
    <property type="entry name" value="Ribosomal_bL32"/>
    <property type="match status" value="1"/>
</dbReference>
<dbReference type="InterPro" id="IPR002677">
    <property type="entry name" value="Ribosomal_bL32"/>
</dbReference>
<dbReference type="InterPro" id="IPR044957">
    <property type="entry name" value="Ribosomal_bL32_bact"/>
</dbReference>
<dbReference type="InterPro" id="IPR011332">
    <property type="entry name" value="Ribosomal_zn-bd"/>
</dbReference>
<dbReference type="NCBIfam" id="TIGR01031">
    <property type="entry name" value="rpmF_bact"/>
    <property type="match status" value="1"/>
</dbReference>
<dbReference type="PANTHER" id="PTHR35534">
    <property type="entry name" value="50S RIBOSOMAL PROTEIN L32"/>
    <property type="match status" value="1"/>
</dbReference>
<dbReference type="PANTHER" id="PTHR35534:SF1">
    <property type="entry name" value="LARGE RIBOSOMAL SUBUNIT PROTEIN BL32"/>
    <property type="match status" value="1"/>
</dbReference>
<dbReference type="Pfam" id="PF01783">
    <property type="entry name" value="Ribosomal_L32p"/>
    <property type="match status" value="1"/>
</dbReference>
<dbReference type="SUPFAM" id="SSF57829">
    <property type="entry name" value="Zn-binding ribosomal proteins"/>
    <property type="match status" value="1"/>
</dbReference>
<organism>
    <name type="scientific">Mycoplasma pneumoniae (strain ATCC 29342 / M129 / Subtype 1)</name>
    <name type="common">Mycoplasmoides pneumoniae</name>
    <dbReference type="NCBI Taxonomy" id="272634"/>
    <lineage>
        <taxon>Bacteria</taxon>
        <taxon>Bacillati</taxon>
        <taxon>Mycoplasmatota</taxon>
        <taxon>Mycoplasmoidales</taxon>
        <taxon>Mycoplasmoidaceae</taxon>
        <taxon>Mycoplasmoides</taxon>
    </lineage>
</organism>